<proteinExistence type="evidence at protein level"/>
<dbReference type="EC" id="1.14.11.-" evidence="4"/>
<dbReference type="EMBL" id="AK022579">
    <property type="protein sequence ID" value="BAB14109.1"/>
    <property type="molecule type" value="mRNA"/>
</dbReference>
<dbReference type="EMBL" id="AK023030">
    <property type="protein sequence ID" value="BAB14366.1"/>
    <property type="molecule type" value="mRNA"/>
</dbReference>
<dbReference type="EMBL" id="AL136378">
    <property type="status" value="NOT_ANNOTATED_CDS"/>
    <property type="molecule type" value="Genomic_DNA"/>
</dbReference>
<dbReference type="CCDS" id="CCDS1561.2">
    <molecule id="Q9H9V9-3"/>
</dbReference>
<dbReference type="CCDS" id="CCDS59203.2">
    <molecule id="Q9H9V9-2"/>
</dbReference>
<dbReference type="RefSeq" id="NP_001154937.2">
    <molecule id="Q9H9V9-2"/>
    <property type="nucleotide sequence ID" value="NM_001161465.2"/>
</dbReference>
<dbReference type="RefSeq" id="NP_075383.3">
    <molecule id="Q9H9V9-3"/>
    <property type="nucleotide sequence ID" value="NM_023007.3"/>
</dbReference>
<dbReference type="BioGRID" id="122393">
    <property type="interactions" value="63"/>
</dbReference>
<dbReference type="FunCoup" id="Q9H9V9">
    <property type="interactions" value="4016"/>
</dbReference>
<dbReference type="IntAct" id="Q9H9V9">
    <property type="interactions" value="60"/>
</dbReference>
<dbReference type="MINT" id="Q9H9V9"/>
<dbReference type="STRING" id="9606.ENSP00000355720"/>
<dbReference type="GlyGen" id="Q9H9V9">
    <property type="glycosylation" value="1 site"/>
</dbReference>
<dbReference type="PhosphoSitePlus" id="Q9H9V9"/>
<dbReference type="BioMuta" id="JMJD4"/>
<dbReference type="DMDM" id="150383500"/>
<dbReference type="jPOST" id="Q9H9V9"/>
<dbReference type="MassIVE" id="Q9H9V9"/>
<dbReference type="PaxDb" id="9606-ENSP00000355720"/>
<dbReference type="PeptideAtlas" id="Q9H9V9"/>
<dbReference type="ProteomicsDB" id="81365">
    <molecule id="Q9H9V9-1"/>
</dbReference>
<dbReference type="ProteomicsDB" id="81366">
    <molecule id="Q9H9V9-2"/>
</dbReference>
<dbReference type="Pumba" id="Q9H9V9"/>
<dbReference type="Antibodypedia" id="20772">
    <property type="antibodies" value="285 antibodies from 30 providers"/>
</dbReference>
<dbReference type="DNASU" id="65094"/>
<dbReference type="Ensembl" id="ENST00000438896.3">
    <molecule id="Q9H9V9-2"/>
    <property type="protein sequence ID" value="ENSP00000387830.3"/>
    <property type="gene ID" value="ENSG00000081692.13"/>
</dbReference>
<dbReference type="Ensembl" id="ENST00000620518.5">
    <molecule id="Q9H9V9-3"/>
    <property type="protein sequence ID" value="ENSP00000477669.1"/>
    <property type="gene ID" value="ENSG00000081692.13"/>
</dbReference>
<dbReference type="GeneID" id="65094"/>
<dbReference type="KEGG" id="hsa:65094"/>
<dbReference type="MANE-Select" id="ENST00000620518.5">
    <property type="protein sequence ID" value="ENSP00000477669.1"/>
    <property type="RefSeq nucleotide sequence ID" value="NM_023007.3"/>
    <property type="RefSeq protein sequence ID" value="NP_075383.3"/>
</dbReference>
<dbReference type="UCSC" id="uc001hrb.3">
    <molecule id="Q9H9V9-3"/>
    <property type="organism name" value="human"/>
</dbReference>
<dbReference type="AGR" id="HGNC:25724"/>
<dbReference type="CTD" id="65094"/>
<dbReference type="DisGeNET" id="65094"/>
<dbReference type="GeneCards" id="JMJD4"/>
<dbReference type="HGNC" id="HGNC:25724">
    <property type="gene designation" value="JMJD4"/>
</dbReference>
<dbReference type="HPA" id="ENSG00000081692">
    <property type="expression patterns" value="Low tissue specificity"/>
</dbReference>
<dbReference type="MIM" id="620928">
    <property type="type" value="gene"/>
</dbReference>
<dbReference type="neXtProt" id="NX_Q9H9V9"/>
<dbReference type="OpenTargets" id="ENSG00000081692"/>
<dbReference type="PharmGKB" id="PA142671643"/>
<dbReference type="VEuPathDB" id="HostDB:ENSG00000081692"/>
<dbReference type="eggNOG" id="KOG2131">
    <property type="taxonomic scope" value="Eukaryota"/>
</dbReference>
<dbReference type="GeneTree" id="ENSGT00940000159380"/>
<dbReference type="HOGENOM" id="CLU_016785_2_2_1"/>
<dbReference type="InParanoid" id="Q9H9V9"/>
<dbReference type="OMA" id="HPCMFSR"/>
<dbReference type="OrthoDB" id="203487at2759"/>
<dbReference type="PAN-GO" id="Q9H9V9">
    <property type="GO annotations" value="7 GO annotations based on evolutionary models"/>
</dbReference>
<dbReference type="PhylomeDB" id="Q9H9V9"/>
<dbReference type="TreeFam" id="TF105936"/>
<dbReference type="PathwayCommons" id="Q9H9V9"/>
<dbReference type="Reactome" id="R-HSA-9629569">
    <property type="pathway name" value="Protein hydroxylation"/>
</dbReference>
<dbReference type="SignaLink" id="Q9H9V9"/>
<dbReference type="BioGRID-ORCS" id="65094">
    <property type="hits" value="12 hits in 1159 CRISPR screens"/>
</dbReference>
<dbReference type="ChiTaRS" id="JMJD4">
    <property type="organism name" value="human"/>
</dbReference>
<dbReference type="GenomeRNAi" id="65094"/>
<dbReference type="Pharos" id="Q9H9V9">
    <property type="development level" value="Tbio"/>
</dbReference>
<dbReference type="PRO" id="PR:Q9H9V9"/>
<dbReference type="Proteomes" id="UP000005640">
    <property type="component" value="Chromosome 1"/>
</dbReference>
<dbReference type="RNAct" id="Q9H9V9">
    <property type="molecule type" value="protein"/>
</dbReference>
<dbReference type="Bgee" id="ENSG00000081692">
    <property type="expression patterns" value="Expressed in left adrenal gland cortex and 106 other cell types or tissues"/>
</dbReference>
<dbReference type="ExpressionAtlas" id="Q9H9V9">
    <property type="expression patterns" value="baseline and differential"/>
</dbReference>
<dbReference type="GO" id="GO:0005737">
    <property type="term" value="C:cytoplasm"/>
    <property type="evidence" value="ECO:0000314"/>
    <property type="project" value="UniProtKB"/>
</dbReference>
<dbReference type="GO" id="GO:0005829">
    <property type="term" value="C:cytosol"/>
    <property type="evidence" value="ECO:0000304"/>
    <property type="project" value="Reactome"/>
</dbReference>
<dbReference type="GO" id="GO:0005634">
    <property type="term" value="C:nucleus"/>
    <property type="evidence" value="ECO:0000318"/>
    <property type="project" value="GO_Central"/>
</dbReference>
<dbReference type="GO" id="GO:0016706">
    <property type="term" value="F:2-oxoglutarate-dependent dioxygenase activity"/>
    <property type="evidence" value="ECO:0000315"/>
    <property type="project" value="UniProtKB"/>
</dbReference>
<dbReference type="GO" id="GO:0046872">
    <property type="term" value="F:metal ion binding"/>
    <property type="evidence" value="ECO:0007669"/>
    <property type="project" value="UniProtKB-KW"/>
</dbReference>
<dbReference type="GO" id="GO:0106156">
    <property type="term" value="F:peptidyl-lysine 4-dioxygenase activity"/>
    <property type="evidence" value="ECO:0000269"/>
    <property type="project" value="Reactome"/>
</dbReference>
<dbReference type="GO" id="GO:0043565">
    <property type="term" value="F:sequence-specific DNA binding"/>
    <property type="evidence" value="ECO:0000318"/>
    <property type="project" value="GO_Central"/>
</dbReference>
<dbReference type="GO" id="GO:0045905">
    <property type="term" value="P:positive regulation of translational termination"/>
    <property type="evidence" value="ECO:0000315"/>
    <property type="project" value="UniProtKB"/>
</dbReference>
<dbReference type="GO" id="GO:0018126">
    <property type="term" value="P:protein hydroxylation"/>
    <property type="evidence" value="ECO:0000315"/>
    <property type="project" value="UniProtKB"/>
</dbReference>
<dbReference type="FunFam" id="2.60.120.650:FF:000030">
    <property type="entry name" value="JmjC domain-containing protein 4"/>
    <property type="match status" value="1"/>
</dbReference>
<dbReference type="Gene3D" id="2.60.120.650">
    <property type="entry name" value="Cupin"/>
    <property type="match status" value="1"/>
</dbReference>
<dbReference type="InterPro" id="IPR003347">
    <property type="entry name" value="JmjC_dom"/>
</dbReference>
<dbReference type="InterPro" id="IPR050910">
    <property type="entry name" value="JMJD6_ArgDemeth/LysHydrox"/>
</dbReference>
<dbReference type="PANTHER" id="PTHR12480:SF6">
    <property type="entry name" value="2-OXOGLUTARATE AND IRON-DEPENDENT OXYGENASE JMJD4"/>
    <property type="match status" value="1"/>
</dbReference>
<dbReference type="PANTHER" id="PTHR12480">
    <property type="entry name" value="ARGININE DEMETHYLASE AND LYSYL-HYDROXYLASE JMJD"/>
    <property type="match status" value="1"/>
</dbReference>
<dbReference type="Pfam" id="PF02373">
    <property type="entry name" value="JmjC"/>
    <property type="match status" value="1"/>
</dbReference>
<dbReference type="SMART" id="SM00558">
    <property type="entry name" value="JmjC"/>
    <property type="match status" value="1"/>
</dbReference>
<dbReference type="SUPFAM" id="SSF51197">
    <property type="entry name" value="Clavaminate synthase-like"/>
    <property type="match status" value="1"/>
</dbReference>
<dbReference type="PROSITE" id="PS51184">
    <property type="entry name" value="JMJC"/>
    <property type="match status" value="1"/>
</dbReference>
<sequence>MDRETRALADSHFRGLGVDVPGVGQAPGRVAFVSEPGAFSYADFVRGFLLPNLPCVFSSAFTQGWGSRRRWVTPAGRPDFDHLLRTYGDVVVPVANCGVQEYNSNPKEHMTLRDYITYWKEYIQAGYSSPRGCLYLKDWHLCRDFPVEDVFTLPVYFSSDWLNEFWDALDVDDYRFVYAGPAGSWSPFHADIFRSFSWSVNVCGRKKWLLFPPGQEEALRDRHGNLPYDVTSPALCDTHLHPRNQLAGPPLEITQEAGEMVFVPSGWHHQVHNLDDTISINHNWVNGFNLANMWRFLQQELCAVQEEVSEWRDSMPDWHHHCQVIMRSCSGINFEEFYHFLKVIAEKRLLVLREAAAEDGAGLGFEQAAFDVGRITEVLASLVAHPDFQRVDTSAFSPQPKELLQQLREAVDAAAAP</sequence>
<accession>Q9H9V9</accession>
<accession>A0A087WT84</accession>
<accession>Q5TBZ1</accession>
<accession>Q5TBZ6</accession>
<accession>Q9H970</accession>
<reference key="1">
    <citation type="journal article" date="2004" name="Nat. Genet.">
        <title>Complete sequencing and characterization of 21,243 full-length human cDNAs.</title>
        <authorList>
            <person name="Ota T."/>
            <person name="Suzuki Y."/>
            <person name="Nishikawa T."/>
            <person name="Otsuki T."/>
            <person name="Sugiyama T."/>
            <person name="Irie R."/>
            <person name="Wakamatsu A."/>
            <person name="Hayashi K."/>
            <person name="Sato H."/>
            <person name="Nagai K."/>
            <person name="Kimura K."/>
            <person name="Makita H."/>
            <person name="Sekine M."/>
            <person name="Obayashi M."/>
            <person name="Nishi T."/>
            <person name="Shibahara T."/>
            <person name="Tanaka T."/>
            <person name="Ishii S."/>
            <person name="Yamamoto J."/>
            <person name="Saito K."/>
            <person name="Kawai Y."/>
            <person name="Isono Y."/>
            <person name="Nakamura Y."/>
            <person name="Nagahari K."/>
            <person name="Murakami K."/>
            <person name="Yasuda T."/>
            <person name="Iwayanagi T."/>
            <person name="Wagatsuma M."/>
            <person name="Shiratori A."/>
            <person name="Sudo H."/>
            <person name="Hosoiri T."/>
            <person name="Kaku Y."/>
            <person name="Kodaira H."/>
            <person name="Kondo H."/>
            <person name="Sugawara M."/>
            <person name="Takahashi M."/>
            <person name="Kanda K."/>
            <person name="Yokoi T."/>
            <person name="Furuya T."/>
            <person name="Kikkawa E."/>
            <person name="Omura Y."/>
            <person name="Abe K."/>
            <person name="Kamihara K."/>
            <person name="Katsuta N."/>
            <person name="Sato K."/>
            <person name="Tanikawa M."/>
            <person name="Yamazaki M."/>
            <person name="Ninomiya K."/>
            <person name="Ishibashi T."/>
            <person name="Yamashita H."/>
            <person name="Murakawa K."/>
            <person name="Fujimori K."/>
            <person name="Tanai H."/>
            <person name="Kimata M."/>
            <person name="Watanabe M."/>
            <person name="Hiraoka S."/>
            <person name="Chiba Y."/>
            <person name="Ishida S."/>
            <person name="Ono Y."/>
            <person name="Takiguchi S."/>
            <person name="Watanabe S."/>
            <person name="Yosida M."/>
            <person name="Hotuta T."/>
            <person name="Kusano J."/>
            <person name="Kanehori K."/>
            <person name="Takahashi-Fujii A."/>
            <person name="Hara H."/>
            <person name="Tanase T.-O."/>
            <person name="Nomura Y."/>
            <person name="Togiya S."/>
            <person name="Komai F."/>
            <person name="Hara R."/>
            <person name="Takeuchi K."/>
            <person name="Arita M."/>
            <person name="Imose N."/>
            <person name="Musashino K."/>
            <person name="Yuuki H."/>
            <person name="Oshima A."/>
            <person name="Sasaki N."/>
            <person name="Aotsuka S."/>
            <person name="Yoshikawa Y."/>
            <person name="Matsunawa H."/>
            <person name="Ichihara T."/>
            <person name="Shiohata N."/>
            <person name="Sano S."/>
            <person name="Moriya S."/>
            <person name="Momiyama H."/>
            <person name="Satoh N."/>
            <person name="Takami S."/>
            <person name="Terashima Y."/>
            <person name="Suzuki O."/>
            <person name="Nakagawa S."/>
            <person name="Senoh A."/>
            <person name="Mizoguchi H."/>
            <person name="Goto Y."/>
            <person name="Shimizu F."/>
            <person name="Wakebe H."/>
            <person name="Hishigaki H."/>
            <person name="Watanabe T."/>
            <person name="Sugiyama A."/>
            <person name="Takemoto M."/>
            <person name="Kawakami B."/>
            <person name="Yamazaki M."/>
            <person name="Watanabe K."/>
            <person name="Kumagai A."/>
            <person name="Itakura S."/>
            <person name="Fukuzumi Y."/>
            <person name="Fujimori Y."/>
            <person name="Komiyama M."/>
            <person name="Tashiro H."/>
            <person name="Tanigami A."/>
            <person name="Fujiwara T."/>
            <person name="Ono T."/>
            <person name="Yamada K."/>
            <person name="Fujii Y."/>
            <person name="Ozaki K."/>
            <person name="Hirao M."/>
            <person name="Ohmori Y."/>
            <person name="Kawabata A."/>
            <person name="Hikiji T."/>
            <person name="Kobatake N."/>
            <person name="Inagaki H."/>
            <person name="Ikema Y."/>
            <person name="Okamoto S."/>
            <person name="Okitani R."/>
            <person name="Kawakami T."/>
            <person name="Noguchi S."/>
            <person name="Itoh T."/>
            <person name="Shigeta K."/>
            <person name="Senba T."/>
            <person name="Matsumura K."/>
            <person name="Nakajima Y."/>
            <person name="Mizuno T."/>
            <person name="Morinaga M."/>
            <person name="Sasaki M."/>
            <person name="Togashi T."/>
            <person name="Oyama M."/>
            <person name="Hata H."/>
            <person name="Watanabe M."/>
            <person name="Komatsu T."/>
            <person name="Mizushima-Sugano J."/>
            <person name="Satoh T."/>
            <person name="Shirai Y."/>
            <person name="Takahashi Y."/>
            <person name="Nakagawa K."/>
            <person name="Okumura K."/>
            <person name="Nagase T."/>
            <person name="Nomura N."/>
            <person name="Kikuchi H."/>
            <person name="Masuho Y."/>
            <person name="Yamashita R."/>
            <person name="Nakai K."/>
            <person name="Yada T."/>
            <person name="Nakamura Y."/>
            <person name="Ohara O."/>
            <person name="Isogai T."/>
            <person name="Sugano S."/>
        </authorList>
    </citation>
    <scope>NUCLEOTIDE SEQUENCE [LARGE SCALE MRNA] (ISOFORMS 1; 2 AND 3)</scope>
    <scope>VARIANT VAL-11 (ISOFORM 1)</scope>
</reference>
<reference key="2">
    <citation type="journal article" date="2006" name="Nature">
        <title>The DNA sequence and biological annotation of human chromosome 1.</title>
        <authorList>
            <person name="Gregory S.G."/>
            <person name="Barlow K.F."/>
            <person name="McLay K.E."/>
            <person name="Kaul R."/>
            <person name="Swarbreck D."/>
            <person name="Dunham A."/>
            <person name="Scott C.E."/>
            <person name="Howe K.L."/>
            <person name="Woodfine K."/>
            <person name="Spencer C.C.A."/>
            <person name="Jones M.C."/>
            <person name="Gillson C."/>
            <person name="Searle S."/>
            <person name="Zhou Y."/>
            <person name="Kokocinski F."/>
            <person name="McDonald L."/>
            <person name="Evans R."/>
            <person name="Phillips K."/>
            <person name="Atkinson A."/>
            <person name="Cooper R."/>
            <person name="Jones C."/>
            <person name="Hall R.E."/>
            <person name="Andrews T.D."/>
            <person name="Lloyd C."/>
            <person name="Ainscough R."/>
            <person name="Almeida J.P."/>
            <person name="Ambrose K.D."/>
            <person name="Anderson F."/>
            <person name="Andrew R.W."/>
            <person name="Ashwell R.I.S."/>
            <person name="Aubin K."/>
            <person name="Babbage A.K."/>
            <person name="Bagguley C.L."/>
            <person name="Bailey J."/>
            <person name="Beasley H."/>
            <person name="Bethel G."/>
            <person name="Bird C.P."/>
            <person name="Bray-Allen S."/>
            <person name="Brown J.Y."/>
            <person name="Brown A.J."/>
            <person name="Buckley D."/>
            <person name="Burton J."/>
            <person name="Bye J."/>
            <person name="Carder C."/>
            <person name="Chapman J.C."/>
            <person name="Clark S.Y."/>
            <person name="Clarke G."/>
            <person name="Clee C."/>
            <person name="Cobley V."/>
            <person name="Collier R.E."/>
            <person name="Corby N."/>
            <person name="Coville G.J."/>
            <person name="Davies J."/>
            <person name="Deadman R."/>
            <person name="Dunn M."/>
            <person name="Earthrowl M."/>
            <person name="Ellington A.G."/>
            <person name="Errington H."/>
            <person name="Frankish A."/>
            <person name="Frankland J."/>
            <person name="French L."/>
            <person name="Garner P."/>
            <person name="Garnett J."/>
            <person name="Gay L."/>
            <person name="Ghori M.R.J."/>
            <person name="Gibson R."/>
            <person name="Gilby L.M."/>
            <person name="Gillett W."/>
            <person name="Glithero R.J."/>
            <person name="Grafham D.V."/>
            <person name="Griffiths C."/>
            <person name="Griffiths-Jones S."/>
            <person name="Grocock R."/>
            <person name="Hammond S."/>
            <person name="Harrison E.S.I."/>
            <person name="Hart E."/>
            <person name="Haugen E."/>
            <person name="Heath P.D."/>
            <person name="Holmes S."/>
            <person name="Holt K."/>
            <person name="Howden P.J."/>
            <person name="Hunt A.R."/>
            <person name="Hunt S.E."/>
            <person name="Hunter G."/>
            <person name="Isherwood J."/>
            <person name="James R."/>
            <person name="Johnson C."/>
            <person name="Johnson D."/>
            <person name="Joy A."/>
            <person name="Kay M."/>
            <person name="Kershaw J.K."/>
            <person name="Kibukawa M."/>
            <person name="Kimberley A.M."/>
            <person name="King A."/>
            <person name="Knights A.J."/>
            <person name="Lad H."/>
            <person name="Laird G."/>
            <person name="Lawlor S."/>
            <person name="Leongamornlert D.A."/>
            <person name="Lloyd D.M."/>
            <person name="Loveland J."/>
            <person name="Lovell J."/>
            <person name="Lush M.J."/>
            <person name="Lyne R."/>
            <person name="Martin S."/>
            <person name="Mashreghi-Mohammadi M."/>
            <person name="Matthews L."/>
            <person name="Matthews N.S.W."/>
            <person name="McLaren S."/>
            <person name="Milne S."/>
            <person name="Mistry S."/>
            <person name="Moore M.J.F."/>
            <person name="Nickerson T."/>
            <person name="O'Dell C.N."/>
            <person name="Oliver K."/>
            <person name="Palmeiri A."/>
            <person name="Palmer S.A."/>
            <person name="Parker A."/>
            <person name="Patel D."/>
            <person name="Pearce A.V."/>
            <person name="Peck A.I."/>
            <person name="Pelan S."/>
            <person name="Phelps K."/>
            <person name="Phillimore B.J."/>
            <person name="Plumb R."/>
            <person name="Rajan J."/>
            <person name="Raymond C."/>
            <person name="Rouse G."/>
            <person name="Saenphimmachak C."/>
            <person name="Sehra H.K."/>
            <person name="Sheridan E."/>
            <person name="Shownkeen R."/>
            <person name="Sims S."/>
            <person name="Skuce C.D."/>
            <person name="Smith M."/>
            <person name="Steward C."/>
            <person name="Subramanian S."/>
            <person name="Sycamore N."/>
            <person name="Tracey A."/>
            <person name="Tromans A."/>
            <person name="Van Helmond Z."/>
            <person name="Wall M."/>
            <person name="Wallis J.M."/>
            <person name="White S."/>
            <person name="Whitehead S.L."/>
            <person name="Wilkinson J.E."/>
            <person name="Willey D.L."/>
            <person name="Williams H."/>
            <person name="Wilming L."/>
            <person name="Wray P.W."/>
            <person name="Wu Z."/>
            <person name="Coulson A."/>
            <person name="Vaudin M."/>
            <person name="Sulston J.E."/>
            <person name="Durbin R.M."/>
            <person name="Hubbard T."/>
            <person name="Wooster R."/>
            <person name="Dunham I."/>
            <person name="Carter N.P."/>
            <person name="McVean G."/>
            <person name="Ross M.T."/>
            <person name="Harrow J."/>
            <person name="Olson M.V."/>
            <person name="Beck S."/>
            <person name="Rogers J."/>
            <person name="Bentley D.R."/>
        </authorList>
    </citation>
    <scope>NUCLEOTIDE SEQUENCE [LARGE SCALE GENOMIC DNA]</scope>
</reference>
<reference key="3">
    <citation type="journal article" date="2014" name="Mol. Cell">
        <title>Optimal translational termination requires C4 lysyl hydroxylation of eRF1.</title>
        <authorList>
            <person name="Feng T."/>
            <person name="Yamamoto A."/>
            <person name="Wilkins S.E."/>
            <person name="Sokolova E."/>
            <person name="Yates L.A."/>
            <person name="Muenzel M."/>
            <person name="Singh P."/>
            <person name="Hopkinson R.J."/>
            <person name="Fischer R."/>
            <person name="Cockman M.E."/>
            <person name="Shelley J."/>
            <person name="Trudgian D.C."/>
            <person name="Schoedel J."/>
            <person name="McCullagh J.S."/>
            <person name="Ge W."/>
            <person name="Kessler B.M."/>
            <person name="Gilbert R.J."/>
            <person name="Frolova L.Y."/>
            <person name="Alkalaeva E."/>
            <person name="Ratcliffe P.J."/>
            <person name="Schofield C.J."/>
            <person name="Coleman M.L."/>
        </authorList>
    </citation>
    <scope>FUNCTION</scope>
    <scope>CATALYTIC ACTIVITY</scope>
    <scope>INTERACTION WITH ETF1 AND ETF1-GSPT1 COMPLEX</scope>
    <scope>COFACTOR</scope>
    <scope>SUBCELLULAR LOCATION</scope>
    <scope>MUTAGENESIS OF HIS-189</scope>
</reference>
<organism>
    <name type="scientific">Homo sapiens</name>
    <name type="common">Human</name>
    <dbReference type="NCBI Taxonomy" id="9606"/>
    <lineage>
        <taxon>Eukaryota</taxon>
        <taxon>Metazoa</taxon>
        <taxon>Chordata</taxon>
        <taxon>Craniata</taxon>
        <taxon>Vertebrata</taxon>
        <taxon>Euteleostomi</taxon>
        <taxon>Mammalia</taxon>
        <taxon>Eutheria</taxon>
        <taxon>Euarchontoglires</taxon>
        <taxon>Primates</taxon>
        <taxon>Haplorrhini</taxon>
        <taxon>Catarrhini</taxon>
        <taxon>Hominidae</taxon>
        <taxon>Homo</taxon>
    </lineage>
</organism>
<feature type="chain" id="PRO_0000291959" description="2-oxoglutarate and iron-dependent oxygenase JMJD4">
    <location>
        <begin position="1"/>
        <end position="417"/>
    </location>
</feature>
<feature type="domain" description="JmjC" evidence="2">
    <location>
        <begin position="142"/>
        <end position="301"/>
    </location>
</feature>
<feature type="binding site" evidence="1">
    <location>
        <position position="189"/>
    </location>
    <ligand>
        <name>Fe cation</name>
        <dbReference type="ChEBI" id="CHEBI:24875"/>
        <note>catalytic</note>
    </ligand>
</feature>
<feature type="binding site" evidence="1">
    <location>
        <position position="191"/>
    </location>
    <ligand>
        <name>Fe cation</name>
        <dbReference type="ChEBI" id="CHEBI:24875"/>
        <note>catalytic</note>
    </ligand>
</feature>
<feature type="binding site" evidence="1">
    <location>
        <position position="269"/>
    </location>
    <ligand>
        <name>Fe cation</name>
        <dbReference type="ChEBI" id="CHEBI:24875"/>
        <note>catalytic</note>
    </ligand>
</feature>
<feature type="splice variant" id="VSP_062164" description="In isoform 1.">
    <original>M</original>
    <variation>MRAGPEPQALAGQKRGALRLLVPRLVLTVSAPAEVRRRVLRPVLSWM</variation>
    <location>
        <position position="1"/>
    </location>
</feature>
<feature type="splice variant" id="VSP_062165" description="In isoform 2.">
    <location>
        <begin position="308"/>
        <end position="323"/>
    </location>
</feature>
<feature type="sequence variant" id="VAR_032900" description="In dbSNP:rs2295994.">
    <original>D</original>
    <variation>E</variation>
    <location>
        <position position="19"/>
    </location>
</feature>
<feature type="sequence variant" id="VAR_032901" description="In dbSNP:rs3087908.">
    <original>A</original>
    <variation>V</variation>
    <location>
        <position position="415"/>
    </location>
</feature>
<feature type="mutagenesis site" description="Loss of interaction with ETF1 and its ability to hydroxylate ETF1." evidence="4">
    <original>H</original>
    <variation>A</variation>
    <location>
        <position position="189"/>
    </location>
</feature>
<feature type="sequence conflict" description="In Ref. 1; BAB14366." evidence="6" ref="1">
    <original>W</original>
    <variation>R</variation>
    <location>
        <position position="198"/>
    </location>
</feature>
<feature type="sequence conflict" description="In Ref. 1; BAB14366." evidence="6" ref="1">
    <original>Q</original>
    <variation>R</variation>
    <location>
        <position position="399"/>
    </location>
</feature>
<feature type="sequence variant" id="VAR_088561" description="In dbSNP:rs7419238." evidence="3">
    <original>A</original>
    <variation>V</variation>
    <location sequence="Q9H9V9-1">
        <position position="11"/>
    </location>
</feature>
<protein>
    <recommendedName>
        <fullName evidence="5">2-oxoglutarate and iron-dependent oxygenase JMJD4</fullName>
        <ecNumber evidence="4">1.14.11.-</ecNumber>
    </recommendedName>
    <alternativeName>
        <fullName>JmjC domain-containing protein 4</fullName>
    </alternativeName>
    <alternativeName>
        <fullName>Jumonji domain-containing protein 4</fullName>
    </alternativeName>
    <alternativeName>
        <fullName evidence="5">Lysyl-hydroxylase JMJD4</fullName>
    </alternativeName>
</protein>
<name>JMJD4_HUMAN</name>
<comment type="function">
    <text evidence="4">Catalyzes the 2-oxoglutarate and iron-dependent C4-lysyl hydroxylation of ETF1 at 'Lys-63' thereby promoting the translational termination efficiency of ETF1.</text>
</comment>
<comment type="catalytic activity">
    <reaction evidence="4">
        <text>L-lysyl-[protein] + 2-oxoglutarate + O2 = 4-hydroxy-L-lysyl-[protein] + succinate + CO2</text>
        <dbReference type="Rhea" id="RHEA:57156"/>
        <dbReference type="Rhea" id="RHEA-COMP:9752"/>
        <dbReference type="Rhea" id="RHEA-COMP:15084"/>
        <dbReference type="ChEBI" id="CHEBI:15379"/>
        <dbReference type="ChEBI" id="CHEBI:16526"/>
        <dbReference type="ChEBI" id="CHEBI:16810"/>
        <dbReference type="ChEBI" id="CHEBI:29969"/>
        <dbReference type="ChEBI" id="CHEBI:30031"/>
        <dbReference type="ChEBI" id="CHEBI:141495"/>
    </reaction>
</comment>
<comment type="cofactor">
    <cofactor evidence="4">
        <name>Fe(2+)</name>
        <dbReference type="ChEBI" id="CHEBI:29033"/>
    </cofactor>
</comment>
<comment type="subunit">
    <text evidence="4">Interacts with ETF1 (PubMed:24486019). Interacts with the ETF1-GSPT1 complex (PubMed:24486019).</text>
</comment>
<comment type="interaction">
    <interactant intactId="EBI-2866290">
        <id>Q9H9V9</id>
    </interactant>
    <interactant intactId="EBI-302023">
        <id>P62805</id>
        <label>H4C9</label>
    </interactant>
    <organismsDiffer>false</organismsDiffer>
    <experiments>3</experiments>
</comment>
<comment type="subcellular location">
    <subcellularLocation>
        <location evidence="4">Cytoplasm</location>
    </subcellularLocation>
</comment>
<comment type="alternative products">
    <event type="alternative splicing"/>
    <event type="alternative initiation"/>
    <isoform>
        <id>Q9H9V9-3</id>
        <name>3</name>
        <sequence type="displayed"/>
    </isoform>
    <isoform>
        <id>Q9H9V9-1</id>
        <name>1</name>
        <sequence type="described" ref="VSP_062164"/>
    </isoform>
    <isoform>
        <id>Q9H9V9-2</id>
        <name>2</name>
        <sequence type="described" ref="VSP_062165"/>
    </isoform>
</comment>
<comment type="similarity">
    <text evidence="6">Belongs to the JMJD6 family.</text>
</comment>
<gene>
    <name type="primary">JMJD4</name>
</gene>
<keyword id="KW-0024">Alternative initiation</keyword>
<keyword id="KW-0025">Alternative splicing</keyword>
<keyword id="KW-0963">Cytoplasm</keyword>
<keyword id="KW-0223">Dioxygenase</keyword>
<keyword id="KW-0408">Iron</keyword>
<keyword id="KW-0479">Metal-binding</keyword>
<keyword id="KW-0560">Oxidoreductase</keyword>
<keyword id="KW-1267">Proteomics identification</keyword>
<keyword id="KW-1185">Reference proteome</keyword>
<evidence type="ECO:0000250" key="1">
    <source>
        <dbReference type="UniProtKB" id="Q6NYC1"/>
    </source>
</evidence>
<evidence type="ECO:0000255" key="2">
    <source>
        <dbReference type="PROSITE-ProRule" id="PRU00538"/>
    </source>
</evidence>
<evidence type="ECO:0000269" key="3">
    <source>
    </source>
</evidence>
<evidence type="ECO:0000269" key="4">
    <source>
    </source>
</evidence>
<evidence type="ECO:0000303" key="5">
    <source>
    </source>
</evidence>
<evidence type="ECO:0000305" key="6"/>